<protein>
    <recommendedName>
        <fullName evidence="1">Acetylglutamate kinase</fullName>
        <ecNumber evidence="1">2.7.2.8</ecNumber>
    </recommendedName>
    <alternativeName>
        <fullName evidence="1">N-acetyl-L-glutamate 5-phosphotransferase</fullName>
    </alternativeName>
    <alternativeName>
        <fullName evidence="1">NAG kinase</fullName>
        <shortName evidence="1">NAGK</shortName>
    </alternativeName>
</protein>
<organism>
    <name type="scientific">Pseudomonas putida (strain ATCC 700007 / DSM 6899 / JCM 31910 / BCRC 17059 / LMG 24140 / F1)</name>
    <dbReference type="NCBI Taxonomy" id="351746"/>
    <lineage>
        <taxon>Bacteria</taxon>
        <taxon>Pseudomonadati</taxon>
        <taxon>Pseudomonadota</taxon>
        <taxon>Gammaproteobacteria</taxon>
        <taxon>Pseudomonadales</taxon>
        <taxon>Pseudomonadaceae</taxon>
        <taxon>Pseudomonas</taxon>
    </lineage>
</organism>
<keyword id="KW-0028">Amino-acid biosynthesis</keyword>
<keyword id="KW-0055">Arginine biosynthesis</keyword>
<keyword id="KW-0067">ATP-binding</keyword>
<keyword id="KW-0963">Cytoplasm</keyword>
<keyword id="KW-0418">Kinase</keyword>
<keyword id="KW-0547">Nucleotide-binding</keyword>
<keyword id="KW-0808">Transferase</keyword>
<gene>
    <name evidence="1" type="primary">argB</name>
    <name type="ordered locus">Pput_5198</name>
</gene>
<comment type="function">
    <text evidence="1">Catalyzes the ATP-dependent phosphorylation of N-acetyl-L-glutamate.</text>
</comment>
<comment type="catalytic activity">
    <reaction evidence="1">
        <text>N-acetyl-L-glutamate + ATP = N-acetyl-L-glutamyl 5-phosphate + ADP</text>
        <dbReference type="Rhea" id="RHEA:14629"/>
        <dbReference type="ChEBI" id="CHEBI:30616"/>
        <dbReference type="ChEBI" id="CHEBI:44337"/>
        <dbReference type="ChEBI" id="CHEBI:57936"/>
        <dbReference type="ChEBI" id="CHEBI:456216"/>
        <dbReference type="EC" id="2.7.2.8"/>
    </reaction>
</comment>
<comment type="pathway">
    <text evidence="1">Amino-acid biosynthesis; L-arginine biosynthesis; N(2)-acetyl-L-ornithine from L-glutamate: step 2/4.</text>
</comment>
<comment type="subcellular location">
    <subcellularLocation>
        <location evidence="1">Cytoplasm</location>
    </subcellularLocation>
</comment>
<comment type="similarity">
    <text evidence="1">Belongs to the acetylglutamate kinase family. ArgB subfamily.</text>
</comment>
<accession>A5WB06</accession>
<name>ARGB_PSEP1</name>
<dbReference type="EC" id="2.7.2.8" evidence="1"/>
<dbReference type="EMBL" id="CP000712">
    <property type="protein sequence ID" value="ABQ81316.1"/>
    <property type="molecule type" value="Genomic_DNA"/>
</dbReference>
<dbReference type="SMR" id="A5WB06"/>
<dbReference type="KEGG" id="ppf:Pput_5198"/>
<dbReference type="eggNOG" id="COG0548">
    <property type="taxonomic scope" value="Bacteria"/>
</dbReference>
<dbReference type="HOGENOM" id="CLU_053680_0_0_6"/>
<dbReference type="UniPathway" id="UPA00068">
    <property type="reaction ID" value="UER00107"/>
</dbReference>
<dbReference type="GO" id="GO:0005737">
    <property type="term" value="C:cytoplasm"/>
    <property type="evidence" value="ECO:0007669"/>
    <property type="project" value="UniProtKB-SubCell"/>
</dbReference>
<dbReference type="GO" id="GO:0003991">
    <property type="term" value="F:acetylglutamate kinase activity"/>
    <property type="evidence" value="ECO:0007669"/>
    <property type="project" value="UniProtKB-UniRule"/>
</dbReference>
<dbReference type="GO" id="GO:0005524">
    <property type="term" value="F:ATP binding"/>
    <property type="evidence" value="ECO:0007669"/>
    <property type="project" value="UniProtKB-UniRule"/>
</dbReference>
<dbReference type="GO" id="GO:0042450">
    <property type="term" value="P:arginine biosynthetic process via ornithine"/>
    <property type="evidence" value="ECO:0007669"/>
    <property type="project" value="UniProtKB-UniRule"/>
</dbReference>
<dbReference type="GO" id="GO:0006526">
    <property type="term" value="P:L-arginine biosynthetic process"/>
    <property type="evidence" value="ECO:0007669"/>
    <property type="project" value="UniProtKB-UniPathway"/>
</dbReference>
<dbReference type="CDD" id="cd04250">
    <property type="entry name" value="AAK_NAGK-C"/>
    <property type="match status" value="1"/>
</dbReference>
<dbReference type="FunFam" id="3.40.1160.10:FF:000004">
    <property type="entry name" value="Acetylglutamate kinase"/>
    <property type="match status" value="1"/>
</dbReference>
<dbReference type="Gene3D" id="3.40.1160.10">
    <property type="entry name" value="Acetylglutamate kinase-like"/>
    <property type="match status" value="1"/>
</dbReference>
<dbReference type="HAMAP" id="MF_00082">
    <property type="entry name" value="ArgB"/>
    <property type="match status" value="1"/>
</dbReference>
<dbReference type="InterPro" id="IPR036393">
    <property type="entry name" value="AceGlu_kinase-like_sf"/>
</dbReference>
<dbReference type="InterPro" id="IPR004662">
    <property type="entry name" value="AcgluKinase_fam"/>
</dbReference>
<dbReference type="InterPro" id="IPR037528">
    <property type="entry name" value="ArgB"/>
</dbReference>
<dbReference type="InterPro" id="IPR001048">
    <property type="entry name" value="Asp/Glu/Uridylate_kinase"/>
</dbReference>
<dbReference type="InterPro" id="IPR001057">
    <property type="entry name" value="Glu/AcGlu_kinase"/>
</dbReference>
<dbReference type="InterPro" id="IPR041727">
    <property type="entry name" value="NAGK-C"/>
</dbReference>
<dbReference type="NCBIfam" id="TIGR00761">
    <property type="entry name" value="argB"/>
    <property type="match status" value="1"/>
</dbReference>
<dbReference type="PANTHER" id="PTHR23342">
    <property type="entry name" value="N-ACETYLGLUTAMATE SYNTHASE"/>
    <property type="match status" value="1"/>
</dbReference>
<dbReference type="PANTHER" id="PTHR23342:SF0">
    <property type="entry name" value="N-ACETYLGLUTAMATE SYNTHASE, MITOCHONDRIAL"/>
    <property type="match status" value="1"/>
</dbReference>
<dbReference type="Pfam" id="PF00696">
    <property type="entry name" value="AA_kinase"/>
    <property type="match status" value="1"/>
</dbReference>
<dbReference type="PIRSF" id="PIRSF000728">
    <property type="entry name" value="NAGK"/>
    <property type="match status" value="1"/>
</dbReference>
<dbReference type="PRINTS" id="PR00474">
    <property type="entry name" value="GLU5KINASE"/>
</dbReference>
<dbReference type="SUPFAM" id="SSF53633">
    <property type="entry name" value="Carbamate kinase-like"/>
    <property type="match status" value="1"/>
</dbReference>
<proteinExistence type="inferred from homology"/>
<sequence>MTLDRDAASHVAEVLSEALPYIRRFVGKTLVIKYGGNAMESEELKTGFARDIVLMKAVGINPVVVHGGGPQIGDLLKRLSIESHFIDGMRVTDSATMDVVEMVLGGQVNKDIVNLINRHGGSAIGLTGKDAELIRARKLTVSRQTPEMTTPEIIDIGHVGEVVSVNTDLLNMLVKGDFIPVIAPIGVGANGESYNINADLVAGKVAEALKAEKLMLLTNIAGLMDKQGQVLTGLTTEQVNELIADGTIYGGMLPKIKCALDAVQGGVNSSHIIDGRVPNAVLLEIFTDSGVGTLITNRKPR</sequence>
<feature type="chain" id="PRO_1000010531" description="Acetylglutamate kinase">
    <location>
        <begin position="1"/>
        <end position="301"/>
    </location>
</feature>
<feature type="binding site" evidence="1">
    <location>
        <begin position="68"/>
        <end position="69"/>
    </location>
    <ligand>
        <name>substrate</name>
    </ligand>
</feature>
<feature type="binding site" evidence="1">
    <location>
        <position position="90"/>
    </location>
    <ligand>
        <name>substrate</name>
    </ligand>
</feature>
<feature type="binding site" evidence="1">
    <location>
        <position position="195"/>
    </location>
    <ligand>
        <name>substrate</name>
    </ligand>
</feature>
<feature type="site" description="Transition state stabilizer" evidence="1">
    <location>
        <position position="33"/>
    </location>
</feature>
<feature type="site" description="Transition state stabilizer" evidence="1">
    <location>
        <position position="255"/>
    </location>
</feature>
<evidence type="ECO:0000255" key="1">
    <source>
        <dbReference type="HAMAP-Rule" id="MF_00082"/>
    </source>
</evidence>
<reference key="1">
    <citation type="submission" date="2007-05" db="EMBL/GenBank/DDBJ databases">
        <title>Complete sequence of Pseudomonas putida F1.</title>
        <authorList>
            <consortium name="US DOE Joint Genome Institute"/>
            <person name="Copeland A."/>
            <person name="Lucas S."/>
            <person name="Lapidus A."/>
            <person name="Barry K."/>
            <person name="Detter J.C."/>
            <person name="Glavina del Rio T."/>
            <person name="Hammon N."/>
            <person name="Israni S."/>
            <person name="Dalin E."/>
            <person name="Tice H."/>
            <person name="Pitluck S."/>
            <person name="Chain P."/>
            <person name="Malfatti S."/>
            <person name="Shin M."/>
            <person name="Vergez L."/>
            <person name="Schmutz J."/>
            <person name="Larimer F."/>
            <person name="Land M."/>
            <person name="Hauser L."/>
            <person name="Kyrpides N."/>
            <person name="Lykidis A."/>
            <person name="Parales R."/>
            <person name="Richardson P."/>
        </authorList>
    </citation>
    <scope>NUCLEOTIDE SEQUENCE [LARGE SCALE GENOMIC DNA]</scope>
    <source>
        <strain>ATCC 700007 / DSM 6899 / JCM 31910 / BCRC 17059 / LMG 24140 / F1</strain>
    </source>
</reference>